<protein>
    <recommendedName>
        <fullName evidence="1">Exodeoxyribonuclease 7 large subunit</fullName>
        <ecNumber evidence="1">3.1.11.6</ecNumber>
    </recommendedName>
    <alternativeName>
        <fullName evidence="1">Exodeoxyribonuclease VII large subunit</fullName>
        <shortName evidence="1">Exonuclease VII large subunit</shortName>
    </alternativeName>
</protein>
<comment type="function">
    <text evidence="1">Bidirectionally degrades single-stranded DNA into large acid-insoluble oligonucleotides, which are then degraded further into small acid-soluble oligonucleotides.</text>
</comment>
<comment type="catalytic activity">
    <reaction evidence="1">
        <text>Exonucleolytic cleavage in either 5'- to 3'- or 3'- to 5'-direction to yield nucleoside 5'-phosphates.</text>
        <dbReference type="EC" id="3.1.11.6"/>
    </reaction>
</comment>
<comment type="subunit">
    <text evidence="1">Heterooligomer composed of large and small subunits.</text>
</comment>
<comment type="subcellular location">
    <subcellularLocation>
        <location evidence="1">Cytoplasm</location>
    </subcellularLocation>
</comment>
<comment type="similarity">
    <text evidence="1">Belongs to the XseA family.</text>
</comment>
<organism>
    <name type="scientific">Lysinibacillus sphaericus (strain C3-41)</name>
    <dbReference type="NCBI Taxonomy" id="444177"/>
    <lineage>
        <taxon>Bacteria</taxon>
        <taxon>Bacillati</taxon>
        <taxon>Bacillota</taxon>
        <taxon>Bacilli</taxon>
        <taxon>Bacillales</taxon>
        <taxon>Bacillaceae</taxon>
        <taxon>Lysinibacillus</taxon>
    </lineage>
</organism>
<evidence type="ECO:0000255" key="1">
    <source>
        <dbReference type="HAMAP-Rule" id="MF_00378"/>
    </source>
</evidence>
<sequence length="452" mass="50991">MSSASYLTVKALTKYIKRKFDADPHLREVYVKGELSNVKIHQSGHIYFTLKDDGARIAATMFKAAATKLAFEPKEGMQVFIRGDVNVYEGYGTYQLYVQEMQPDGIGSLFVAFNQLKEQLQKEGLFKLDWKQSIPKFPEKIGVLTSTTGAAIRDICTTLKRRYPLAEILIYPTLVQGAQAAPNIVQNIQRANQDATCQVLIVGRGGGSIEDLWAFNEEIVARAIFESRIPIISAVGHETDTTIADYVSDLRAPTPTAAAEMAVPDQMELFQRVLSQKSQIHQMVRSQLMAERQRLNKLQQSYPLSMPERLYRPFTERLAQLESGLQTAMQVDLMKKSAQLQQLHSTVAQHSPKKALAFHQRELEARMQQLTRAATYYVAKQQQQFEATIRTLEALNPLSILTRGFTVAYKDQHMIKSSTEVQEQDYLTLAFHDGKVVAEVKDILPKNEGESL</sequence>
<feature type="chain" id="PRO_1000122072" description="Exodeoxyribonuclease 7 large subunit">
    <location>
        <begin position="1"/>
        <end position="452"/>
    </location>
</feature>
<gene>
    <name evidence="1" type="primary">xseA</name>
    <name type="ordered locus">Bsph_3512</name>
</gene>
<reference key="1">
    <citation type="journal article" date="2008" name="J. Bacteriol.">
        <title>Complete genome sequence of the mosquitocidal bacterium Bacillus sphaericus C3-41 and comparison with those of closely related Bacillus species.</title>
        <authorList>
            <person name="Hu X."/>
            <person name="Fan W."/>
            <person name="Han B."/>
            <person name="Liu H."/>
            <person name="Zheng D."/>
            <person name="Li Q."/>
            <person name="Dong W."/>
            <person name="Yan J."/>
            <person name="Gao M."/>
            <person name="Berry C."/>
            <person name="Yuan Z."/>
        </authorList>
    </citation>
    <scope>NUCLEOTIDE SEQUENCE [LARGE SCALE GENOMIC DNA]</scope>
    <source>
        <strain>C3-41</strain>
    </source>
</reference>
<keyword id="KW-0963">Cytoplasm</keyword>
<keyword id="KW-0269">Exonuclease</keyword>
<keyword id="KW-0378">Hydrolase</keyword>
<keyword id="KW-0540">Nuclease</keyword>
<dbReference type="EC" id="3.1.11.6" evidence="1"/>
<dbReference type="EMBL" id="CP000817">
    <property type="protein sequence ID" value="ACA41000.1"/>
    <property type="molecule type" value="Genomic_DNA"/>
</dbReference>
<dbReference type="RefSeq" id="WP_012295059.1">
    <property type="nucleotide sequence ID" value="NC_010382.1"/>
</dbReference>
<dbReference type="SMR" id="B1HRX7"/>
<dbReference type="EnsemblBacteria" id="ACA41000">
    <property type="protein sequence ID" value="ACA41000"/>
    <property type="gene ID" value="Bsph_3512"/>
</dbReference>
<dbReference type="KEGG" id="lsp:Bsph_3512"/>
<dbReference type="HOGENOM" id="CLU_023625_3_1_9"/>
<dbReference type="Proteomes" id="UP000002164">
    <property type="component" value="Chromosome"/>
</dbReference>
<dbReference type="GO" id="GO:0005737">
    <property type="term" value="C:cytoplasm"/>
    <property type="evidence" value="ECO:0007669"/>
    <property type="project" value="UniProtKB-SubCell"/>
</dbReference>
<dbReference type="GO" id="GO:0009318">
    <property type="term" value="C:exodeoxyribonuclease VII complex"/>
    <property type="evidence" value="ECO:0007669"/>
    <property type="project" value="InterPro"/>
</dbReference>
<dbReference type="GO" id="GO:0008855">
    <property type="term" value="F:exodeoxyribonuclease VII activity"/>
    <property type="evidence" value="ECO:0007669"/>
    <property type="project" value="UniProtKB-UniRule"/>
</dbReference>
<dbReference type="GO" id="GO:0003676">
    <property type="term" value="F:nucleic acid binding"/>
    <property type="evidence" value="ECO:0007669"/>
    <property type="project" value="InterPro"/>
</dbReference>
<dbReference type="GO" id="GO:0006308">
    <property type="term" value="P:DNA catabolic process"/>
    <property type="evidence" value="ECO:0007669"/>
    <property type="project" value="UniProtKB-UniRule"/>
</dbReference>
<dbReference type="CDD" id="cd04489">
    <property type="entry name" value="ExoVII_LU_OBF"/>
    <property type="match status" value="1"/>
</dbReference>
<dbReference type="HAMAP" id="MF_00378">
    <property type="entry name" value="Exonuc_7_L"/>
    <property type="match status" value="1"/>
</dbReference>
<dbReference type="InterPro" id="IPR003753">
    <property type="entry name" value="Exonuc_VII_L"/>
</dbReference>
<dbReference type="InterPro" id="IPR020579">
    <property type="entry name" value="Exonuc_VII_lsu_C"/>
</dbReference>
<dbReference type="InterPro" id="IPR025824">
    <property type="entry name" value="OB-fold_nuc-bd_dom"/>
</dbReference>
<dbReference type="NCBIfam" id="TIGR00237">
    <property type="entry name" value="xseA"/>
    <property type="match status" value="1"/>
</dbReference>
<dbReference type="PANTHER" id="PTHR30008">
    <property type="entry name" value="EXODEOXYRIBONUCLEASE 7 LARGE SUBUNIT"/>
    <property type="match status" value="1"/>
</dbReference>
<dbReference type="PANTHER" id="PTHR30008:SF0">
    <property type="entry name" value="EXODEOXYRIBONUCLEASE 7 LARGE SUBUNIT"/>
    <property type="match status" value="1"/>
</dbReference>
<dbReference type="Pfam" id="PF02601">
    <property type="entry name" value="Exonuc_VII_L"/>
    <property type="match status" value="1"/>
</dbReference>
<dbReference type="Pfam" id="PF13742">
    <property type="entry name" value="tRNA_anti_2"/>
    <property type="match status" value="1"/>
</dbReference>
<name>EX7L_LYSSC</name>
<proteinExistence type="inferred from homology"/>
<accession>B1HRX7</accession>